<proteinExistence type="inferred from homology"/>
<comment type="function">
    <text evidence="1">Associates with the EF-Tu.GDP complex and induces the exchange of GDP to GTP. It remains bound to the aminoacyl-tRNA.EF-Tu.GTP complex up to the GTP hydrolysis stage on the ribosome.</text>
</comment>
<comment type="subcellular location">
    <subcellularLocation>
        <location evidence="1">Cytoplasm</location>
    </subcellularLocation>
</comment>
<comment type="similarity">
    <text evidence="1">Belongs to the EF-Ts family.</text>
</comment>
<name>EFTS_NOSS1</name>
<organism>
    <name type="scientific">Nostoc sp. (strain PCC 7120 / SAG 25.82 / UTEX 2576)</name>
    <dbReference type="NCBI Taxonomy" id="103690"/>
    <lineage>
        <taxon>Bacteria</taxon>
        <taxon>Bacillati</taxon>
        <taxon>Cyanobacteriota</taxon>
        <taxon>Cyanophyceae</taxon>
        <taxon>Nostocales</taxon>
        <taxon>Nostocaceae</taxon>
        <taxon>Nostoc</taxon>
    </lineage>
</organism>
<protein>
    <recommendedName>
        <fullName evidence="1">Elongation factor Ts</fullName>
        <shortName evidence="1">EF-Ts</shortName>
    </recommendedName>
</protein>
<keyword id="KW-0963">Cytoplasm</keyword>
<keyword id="KW-0251">Elongation factor</keyword>
<keyword id="KW-0648">Protein biosynthesis</keyword>
<keyword id="KW-1185">Reference proteome</keyword>
<dbReference type="EMBL" id="BA000019">
    <property type="protein sequence ID" value="BAB76490.1"/>
    <property type="molecule type" value="Genomic_DNA"/>
</dbReference>
<dbReference type="PIR" id="AG2404">
    <property type="entry name" value="AG2404"/>
</dbReference>
<dbReference type="RefSeq" id="WP_010998921.1">
    <property type="nucleotide sequence ID" value="NZ_RSCN01000035.1"/>
</dbReference>
<dbReference type="SMR" id="Q8YMY3"/>
<dbReference type="STRING" id="103690.gene:10496844"/>
<dbReference type="KEGG" id="ana:all4791"/>
<dbReference type="eggNOG" id="COG0264">
    <property type="taxonomic scope" value="Bacteria"/>
</dbReference>
<dbReference type="OrthoDB" id="9808348at2"/>
<dbReference type="Proteomes" id="UP000002483">
    <property type="component" value="Chromosome"/>
</dbReference>
<dbReference type="GO" id="GO:0005737">
    <property type="term" value="C:cytoplasm"/>
    <property type="evidence" value="ECO:0007669"/>
    <property type="project" value="UniProtKB-SubCell"/>
</dbReference>
<dbReference type="GO" id="GO:0003746">
    <property type="term" value="F:translation elongation factor activity"/>
    <property type="evidence" value="ECO:0007669"/>
    <property type="project" value="UniProtKB-UniRule"/>
</dbReference>
<dbReference type="CDD" id="cd14275">
    <property type="entry name" value="UBA_EF-Ts"/>
    <property type="match status" value="1"/>
</dbReference>
<dbReference type="FunFam" id="1.10.286.20:FF:000001">
    <property type="entry name" value="Elongation factor Ts"/>
    <property type="match status" value="1"/>
</dbReference>
<dbReference type="FunFam" id="1.10.8.10:FF:000001">
    <property type="entry name" value="Elongation factor Ts"/>
    <property type="match status" value="1"/>
</dbReference>
<dbReference type="Gene3D" id="1.10.286.20">
    <property type="match status" value="1"/>
</dbReference>
<dbReference type="Gene3D" id="1.10.8.10">
    <property type="entry name" value="DNA helicase RuvA subunit, C-terminal domain"/>
    <property type="match status" value="1"/>
</dbReference>
<dbReference type="Gene3D" id="3.30.479.20">
    <property type="entry name" value="Elongation factor Ts, dimerisation domain"/>
    <property type="match status" value="2"/>
</dbReference>
<dbReference type="HAMAP" id="MF_00050">
    <property type="entry name" value="EF_Ts"/>
    <property type="match status" value="1"/>
</dbReference>
<dbReference type="InterPro" id="IPR036402">
    <property type="entry name" value="EF-Ts_dimer_sf"/>
</dbReference>
<dbReference type="InterPro" id="IPR001816">
    <property type="entry name" value="Transl_elong_EFTs/EF1B"/>
</dbReference>
<dbReference type="InterPro" id="IPR014039">
    <property type="entry name" value="Transl_elong_EFTs/EF1B_dimer"/>
</dbReference>
<dbReference type="InterPro" id="IPR018101">
    <property type="entry name" value="Transl_elong_Ts_CS"/>
</dbReference>
<dbReference type="InterPro" id="IPR009060">
    <property type="entry name" value="UBA-like_sf"/>
</dbReference>
<dbReference type="NCBIfam" id="TIGR00116">
    <property type="entry name" value="tsf"/>
    <property type="match status" value="1"/>
</dbReference>
<dbReference type="PANTHER" id="PTHR11741">
    <property type="entry name" value="ELONGATION FACTOR TS"/>
    <property type="match status" value="1"/>
</dbReference>
<dbReference type="PANTHER" id="PTHR11741:SF10">
    <property type="entry name" value="POLYPROTEIN OF EF-TS, CHLOROPLASTIC"/>
    <property type="match status" value="1"/>
</dbReference>
<dbReference type="Pfam" id="PF00889">
    <property type="entry name" value="EF_TS"/>
    <property type="match status" value="1"/>
</dbReference>
<dbReference type="SUPFAM" id="SSF54713">
    <property type="entry name" value="Elongation factor Ts (EF-Ts), dimerisation domain"/>
    <property type="match status" value="2"/>
</dbReference>
<dbReference type="SUPFAM" id="SSF46934">
    <property type="entry name" value="UBA-like"/>
    <property type="match status" value="1"/>
</dbReference>
<dbReference type="PROSITE" id="PS01126">
    <property type="entry name" value="EF_TS_1"/>
    <property type="match status" value="1"/>
</dbReference>
<dbReference type="PROSITE" id="PS01127">
    <property type="entry name" value="EF_TS_2"/>
    <property type="match status" value="1"/>
</dbReference>
<gene>
    <name evidence="1" type="primary">tsf</name>
    <name type="ordered locus">all4791</name>
</gene>
<reference key="1">
    <citation type="journal article" date="2001" name="DNA Res.">
        <title>Complete genomic sequence of the filamentous nitrogen-fixing cyanobacterium Anabaena sp. strain PCC 7120.</title>
        <authorList>
            <person name="Kaneko T."/>
            <person name="Nakamura Y."/>
            <person name="Wolk C.P."/>
            <person name="Kuritz T."/>
            <person name="Sasamoto S."/>
            <person name="Watanabe A."/>
            <person name="Iriguchi M."/>
            <person name="Ishikawa A."/>
            <person name="Kawashima K."/>
            <person name="Kimura T."/>
            <person name="Kishida Y."/>
            <person name="Kohara M."/>
            <person name="Matsumoto M."/>
            <person name="Matsuno A."/>
            <person name="Muraki A."/>
            <person name="Nakazaki N."/>
            <person name="Shimpo S."/>
            <person name="Sugimoto M."/>
            <person name="Takazawa M."/>
            <person name="Yamada M."/>
            <person name="Yasuda M."/>
            <person name="Tabata S."/>
        </authorList>
    </citation>
    <scope>NUCLEOTIDE SEQUENCE [LARGE SCALE GENOMIC DNA]</scope>
    <source>
        <strain>PCC 7120 / SAG 25.82 / UTEX 2576</strain>
    </source>
</reference>
<feature type="chain" id="PRO_0000161065" description="Elongation factor Ts">
    <location>
        <begin position="1"/>
        <end position="313"/>
    </location>
</feature>
<feature type="region of interest" description="Involved in Mg(2+) ion dislocation from EF-Tu" evidence="1">
    <location>
        <begin position="82"/>
        <end position="85"/>
    </location>
</feature>
<sequence>MAEISAKLVQELRQKTGAGMMDCKKALKETEGDVEQAIDWLRKKGIASAGKKSDRIAAEGLVDTYIQPGGKVGVLIEVNCQTDFVARNDAFKTLVKNLAQQAATADSVESLLAQPYIEDANLTVDEAIKQTIANLGENIQVRRFINFALTDKTGVVDSYIHTGGRVGVLVELNSQSEAGAANEEVQNLARNAAMQVAACPNVEYVSVDQIPAEVVQREKDVESGKEDIANKPENIREKIVQGRIEKRLKELTLVDQPYIRDQSISVEDLVKQVKAKAGEEVEVSRFVRYILGEGIEKQESNFAEEVAAQMGVK</sequence>
<evidence type="ECO:0000255" key="1">
    <source>
        <dbReference type="HAMAP-Rule" id="MF_00050"/>
    </source>
</evidence>
<accession>Q8YMY3</accession>